<proteinExistence type="inferred from homology"/>
<gene>
    <name evidence="1" type="primary">psbK</name>
</gene>
<organism>
    <name type="scientific">Euglena viridis</name>
    <name type="common">Cercaria viridis</name>
    <dbReference type="NCBI Taxonomy" id="3040"/>
    <lineage>
        <taxon>Eukaryota</taxon>
        <taxon>Discoba</taxon>
        <taxon>Euglenozoa</taxon>
        <taxon>Euglenida</taxon>
        <taxon>Spirocuta</taxon>
        <taxon>Euglenophyceae</taxon>
        <taxon>Euglenales</taxon>
        <taxon>Euglenaceae</taxon>
        <taxon>Euglena</taxon>
    </lineage>
</organism>
<comment type="function">
    <text evidence="1">One of the components of the core complex of photosystem II (PSII). PSII is a light-driven water:plastoquinone oxidoreductase that uses light energy to abstract electrons from H(2)O, generating O(2) and a proton gradient subsequently used for ATP formation. It consists of a core antenna complex that captures photons, and an electron transfer chain that converts photonic excitation into a charge separation.</text>
</comment>
<comment type="subunit">
    <text evidence="2">PSII is composed of 1 copy each of membrane proteins PsbA, PsbB, PsbC, PsbD, PsbE, PsbF, PsbH, PsbI, PsbJ, PsbK, PsbL, PsbM, PsbT, PsbY, PsbZ, Psb30/Ycf12, at least 3 peripheral proteins of the oxygen-evolving complex and a large number of cofactors. It forms dimeric complexes.</text>
</comment>
<comment type="subcellular location">
    <subcellularLocation>
        <location evidence="1">Plastid</location>
        <location evidence="1">Chloroplast thylakoid membrane</location>
        <topology evidence="1">Single-pass membrane protein</topology>
    </subcellularLocation>
</comment>
<comment type="similarity">
    <text evidence="1">Belongs to the PsbK family.</text>
</comment>
<keyword id="KW-0150">Chloroplast</keyword>
<keyword id="KW-0472">Membrane</keyword>
<keyword id="KW-0602">Photosynthesis</keyword>
<keyword id="KW-0604">Photosystem II</keyword>
<keyword id="KW-0934">Plastid</keyword>
<keyword id="KW-0674">Reaction center</keyword>
<keyword id="KW-0793">Thylakoid</keyword>
<keyword id="KW-0812">Transmembrane</keyword>
<keyword id="KW-1133">Transmembrane helix</keyword>
<evidence type="ECO:0000255" key="1">
    <source>
        <dbReference type="HAMAP-Rule" id="MF_00441"/>
    </source>
</evidence>
<evidence type="ECO:0000305" key="2"/>
<protein>
    <recommendedName>
        <fullName evidence="1">Photosystem II reaction center protein K</fullName>
        <shortName evidence="1">PSII-K</shortName>
    </recommendedName>
</protein>
<accession>Q9MS55</accession>
<geneLocation type="chloroplast"/>
<dbReference type="EMBL" id="AF241284">
    <property type="protein sequence ID" value="AAF82462.1"/>
    <property type="molecule type" value="Genomic_DNA"/>
</dbReference>
<dbReference type="SMR" id="Q9MS55"/>
<dbReference type="GO" id="GO:0009535">
    <property type="term" value="C:chloroplast thylakoid membrane"/>
    <property type="evidence" value="ECO:0007669"/>
    <property type="project" value="UniProtKB-SubCell"/>
</dbReference>
<dbReference type="GO" id="GO:0009539">
    <property type="term" value="C:photosystem II reaction center"/>
    <property type="evidence" value="ECO:0007669"/>
    <property type="project" value="InterPro"/>
</dbReference>
<dbReference type="GO" id="GO:0015979">
    <property type="term" value="P:photosynthesis"/>
    <property type="evidence" value="ECO:0007669"/>
    <property type="project" value="UniProtKB-UniRule"/>
</dbReference>
<dbReference type="HAMAP" id="MF_00441">
    <property type="entry name" value="PSII_PsbK"/>
    <property type="match status" value="1"/>
</dbReference>
<dbReference type="InterPro" id="IPR003687">
    <property type="entry name" value="PSII_PsbK"/>
</dbReference>
<dbReference type="InterPro" id="IPR037270">
    <property type="entry name" value="PSII_PsbK_sf"/>
</dbReference>
<dbReference type="NCBIfam" id="NF002715">
    <property type="entry name" value="PRK02553.1"/>
    <property type="match status" value="1"/>
</dbReference>
<dbReference type="PANTHER" id="PTHR35325">
    <property type="match status" value="1"/>
</dbReference>
<dbReference type="PANTHER" id="PTHR35325:SF1">
    <property type="entry name" value="PHOTOSYSTEM II REACTION CENTER PROTEIN K"/>
    <property type="match status" value="1"/>
</dbReference>
<dbReference type="Pfam" id="PF02533">
    <property type="entry name" value="PsbK"/>
    <property type="match status" value="1"/>
</dbReference>
<dbReference type="SUPFAM" id="SSF161037">
    <property type="entry name" value="Photosystem II reaction center protein K, PsbK"/>
    <property type="match status" value="1"/>
</dbReference>
<reference key="1">
    <citation type="journal article" date="2001" name="Mol. Gen. Genet.">
        <title>Comparison of psbK operon organization and group III intron content in chloroplast genomes of 12 Euglenoid species.</title>
        <authorList>
            <person name="Doetsch N.A."/>
            <person name="Thompson M.D."/>
            <person name="Favreau M.R."/>
            <person name="Hallick R.B."/>
        </authorList>
    </citation>
    <scope>NUCLEOTIDE SEQUENCE [GENOMIC DNA]</scope>
</reference>
<sequence length="45" mass="5180">MFSINFLGLLPEAYAPFDPIVDVLPIIPLLFLLLAFVWQSSVRFR</sequence>
<name>PSBK_EUGVI</name>
<feature type="propeptide" id="PRO_0000432465" evidence="1">
    <location>
        <begin position="1"/>
        <end position="8"/>
    </location>
</feature>
<feature type="chain" id="PRO_0000029470" description="Photosystem II reaction center protein K" evidence="1">
    <location>
        <begin position="9"/>
        <end position="45"/>
    </location>
</feature>
<feature type="transmembrane region" description="Helical" evidence="1">
    <location>
        <begin position="17"/>
        <end position="37"/>
    </location>
</feature>